<organism>
    <name type="scientific">Mycobacterium leprae (strain Br4923)</name>
    <dbReference type="NCBI Taxonomy" id="561304"/>
    <lineage>
        <taxon>Bacteria</taxon>
        <taxon>Bacillati</taxon>
        <taxon>Actinomycetota</taxon>
        <taxon>Actinomycetes</taxon>
        <taxon>Mycobacteriales</taxon>
        <taxon>Mycobacteriaceae</taxon>
        <taxon>Mycobacterium</taxon>
    </lineage>
</organism>
<evidence type="ECO:0000255" key="1">
    <source>
        <dbReference type="HAMAP-Rule" id="MF_00500"/>
    </source>
</evidence>
<evidence type="ECO:0000256" key="2">
    <source>
        <dbReference type="SAM" id="MobiDB-lite"/>
    </source>
</evidence>
<evidence type="ECO:0000305" key="3"/>
<proteinExistence type="inferred from homology"/>
<dbReference type="EMBL" id="FM211192">
    <property type="protein sequence ID" value="CAR70697.1"/>
    <property type="molecule type" value="Genomic_DNA"/>
</dbReference>
<dbReference type="SMR" id="B8ZUR8"/>
<dbReference type="KEGG" id="mlb:MLBr00604"/>
<dbReference type="HOGENOM" id="CLU_160655_0_1_11"/>
<dbReference type="Proteomes" id="UP000006900">
    <property type="component" value="Chromosome"/>
</dbReference>
<dbReference type="GO" id="GO:0005829">
    <property type="term" value="C:cytosol"/>
    <property type="evidence" value="ECO:0007669"/>
    <property type="project" value="TreeGrafter"/>
</dbReference>
<dbReference type="GO" id="GO:0015935">
    <property type="term" value="C:small ribosomal subunit"/>
    <property type="evidence" value="ECO:0007669"/>
    <property type="project" value="TreeGrafter"/>
</dbReference>
<dbReference type="GO" id="GO:0070181">
    <property type="term" value="F:small ribosomal subunit rRNA binding"/>
    <property type="evidence" value="ECO:0007669"/>
    <property type="project" value="TreeGrafter"/>
</dbReference>
<dbReference type="GO" id="GO:0003735">
    <property type="term" value="F:structural constituent of ribosome"/>
    <property type="evidence" value="ECO:0007669"/>
    <property type="project" value="InterPro"/>
</dbReference>
<dbReference type="GO" id="GO:0006412">
    <property type="term" value="P:translation"/>
    <property type="evidence" value="ECO:0007669"/>
    <property type="project" value="UniProtKB-UniRule"/>
</dbReference>
<dbReference type="FunFam" id="1.20.58.110:FF:000001">
    <property type="entry name" value="30S ribosomal protein S20"/>
    <property type="match status" value="1"/>
</dbReference>
<dbReference type="Gene3D" id="1.20.58.110">
    <property type="entry name" value="Ribosomal protein S20"/>
    <property type="match status" value="1"/>
</dbReference>
<dbReference type="HAMAP" id="MF_00500">
    <property type="entry name" value="Ribosomal_bS20"/>
    <property type="match status" value="1"/>
</dbReference>
<dbReference type="InterPro" id="IPR002583">
    <property type="entry name" value="Ribosomal_bS20"/>
</dbReference>
<dbReference type="InterPro" id="IPR036510">
    <property type="entry name" value="Ribosomal_bS20_sf"/>
</dbReference>
<dbReference type="NCBIfam" id="TIGR00029">
    <property type="entry name" value="S20"/>
    <property type="match status" value="1"/>
</dbReference>
<dbReference type="PANTHER" id="PTHR33398">
    <property type="entry name" value="30S RIBOSOMAL PROTEIN S20"/>
    <property type="match status" value="1"/>
</dbReference>
<dbReference type="PANTHER" id="PTHR33398:SF1">
    <property type="entry name" value="SMALL RIBOSOMAL SUBUNIT PROTEIN BS20C"/>
    <property type="match status" value="1"/>
</dbReference>
<dbReference type="Pfam" id="PF01649">
    <property type="entry name" value="Ribosomal_S20p"/>
    <property type="match status" value="1"/>
</dbReference>
<dbReference type="SUPFAM" id="SSF46992">
    <property type="entry name" value="Ribosomal protein S20"/>
    <property type="match status" value="1"/>
</dbReference>
<accession>B8ZUR8</accession>
<reference key="1">
    <citation type="journal article" date="2009" name="Nat. Genet.">
        <title>Comparative genomic and phylogeographic analysis of Mycobacterium leprae.</title>
        <authorList>
            <person name="Monot M."/>
            <person name="Honore N."/>
            <person name="Garnier T."/>
            <person name="Zidane N."/>
            <person name="Sherafi D."/>
            <person name="Paniz-Mondolfi A."/>
            <person name="Matsuoka M."/>
            <person name="Taylor G.M."/>
            <person name="Donoghue H.D."/>
            <person name="Bouwman A."/>
            <person name="Mays S."/>
            <person name="Watson C."/>
            <person name="Lockwood D."/>
            <person name="Khamispour A."/>
            <person name="Dowlati Y."/>
            <person name="Jianping S."/>
            <person name="Rea T.H."/>
            <person name="Vera-Cabrera L."/>
            <person name="Stefani M.M."/>
            <person name="Banu S."/>
            <person name="Macdonald M."/>
            <person name="Sapkota B.R."/>
            <person name="Spencer J.S."/>
            <person name="Thomas J."/>
            <person name="Harshman K."/>
            <person name="Singh P."/>
            <person name="Busso P."/>
            <person name="Gattiker A."/>
            <person name="Rougemont J."/>
            <person name="Brennan P.J."/>
            <person name="Cole S.T."/>
        </authorList>
    </citation>
    <scope>NUCLEOTIDE SEQUENCE [LARGE SCALE GENOMIC DNA]</scope>
    <source>
        <strain>Br4923</strain>
    </source>
</reference>
<gene>
    <name evidence="1" type="primary">rpsT</name>
    <name type="ordered locus">MLBr00604</name>
</gene>
<feature type="chain" id="PRO_1000194255" description="Small ribosomal subunit protein bS20">
    <location>
        <begin position="1"/>
        <end position="86"/>
    </location>
</feature>
<feature type="region of interest" description="Disordered" evidence="2">
    <location>
        <begin position="1"/>
        <end position="25"/>
    </location>
</feature>
<protein>
    <recommendedName>
        <fullName evidence="1">Small ribosomal subunit protein bS20</fullName>
    </recommendedName>
    <alternativeName>
        <fullName evidence="3">30S ribosomal protein S20</fullName>
    </alternativeName>
</protein>
<comment type="function">
    <text evidence="1">Binds directly to 16S ribosomal RNA.</text>
</comment>
<comment type="similarity">
    <text evidence="1">Belongs to the bacterial ribosomal protein bS20 family.</text>
</comment>
<name>RS20_MYCLB</name>
<keyword id="KW-0687">Ribonucleoprotein</keyword>
<keyword id="KW-0689">Ribosomal protein</keyword>
<keyword id="KW-0694">RNA-binding</keyword>
<keyword id="KW-0699">rRNA-binding</keyword>
<sequence length="86" mass="9609">MTNIKSQQKRNRTNERARLRNKSVKSSLRTAVRAFREAVHAGEKEKAAKLLVSTSRKLDKAASKGVIHKNQAANKKSALARTLNKL</sequence>